<proteinExistence type="inferred from homology"/>
<name>RBL_BETPA</name>
<protein>
    <recommendedName>
        <fullName evidence="1">Ribulose bisphosphate carboxylase large chain</fullName>
        <shortName evidence="1">RuBisCO large subunit</shortName>
        <ecNumber evidence="1">4.1.1.39</ecNumber>
    </recommendedName>
</protein>
<evidence type="ECO:0000255" key="1">
    <source>
        <dbReference type="HAMAP-Rule" id="MF_01338"/>
    </source>
</evidence>
<comment type="function">
    <text evidence="1">RuBisCO catalyzes two reactions: the carboxylation of D-ribulose 1,5-bisphosphate, the primary event in carbon dioxide fixation, as well as the oxidative fragmentation of the pentose substrate in the photorespiration process. Both reactions occur simultaneously and in competition at the same active site.</text>
</comment>
<comment type="catalytic activity">
    <reaction evidence="1">
        <text>2 (2R)-3-phosphoglycerate + 2 H(+) = D-ribulose 1,5-bisphosphate + CO2 + H2O</text>
        <dbReference type="Rhea" id="RHEA:23124"/>
        <dbReference type="ChEBI" id="CHEBI:15377"/>
        <dbReference type="ChEBI" id="CHEBI:15378"/>
        <dbReference type="ChEBI" id="CHEBI:16526"/>
        <dbReference type="ChEBI" id="CHEBI:57870"/>
        <dbReference type="ChEBI" id="CHEBI:58272"/>
        <dbReference type="EC" id="4.1.1.39"/>
    </reaction>
</comment>
<comment type="catalytic activity">
    <reaction evidence="1">
        <text>D-ribulose 1,5-bisphosphate + O2 = 2-phosphoglycolate + (2R)-3-phosphoglycerate + 2 H(+)</text>
        <dbReference type="Rhea" id="RHEA:36631"/>
        <dbReference type="ChEBI" id="CHEBI:15378"/>
        <dbReference type="ChEBI" id="CHEBI:15379"/>
        <dbReference type="ChEBI" id="CHEBI:57870"/>
        <dbReference type="ChEBI" id="CHEBI:58033"/>
        <dbReference type="ChEBI" id="CHEBI:58272"/>
    </reaction>
</comment>
<comment type="cofactor">
    <cofactor evidence="1">
        <name>Mg(2+)</name>
        <dbReference type="ChEBI" id="CHEBI:18420"/>
    </cofactor>
    <text evidence="1">Binds 1 Mg(2+) ion per subunit.</text>
</comment>
<comment type="subunit">
    <text evidence="1">Heterohexadecamer of 8 large chains and 8 small chains; disulfide-linked. The disulfide link is formed within the large subunit homodimers.</text>
</comment>
<comment type="subcellular location">
    <subcellularLocation>
        <location>Plastid</location>
        <location>Chloroplast</location>
    </subcellularLocation>
</comment>
<comment type="PTM">
    <text evidence="1">The disulfide bond which can form in the large chain dimeric partners within the hexadecamer appears to be associated with oxidative stress and protein turnover.</text>
</comment>
<comment type="miscellaneous">
    <text evidence="1">The basic functional RuBisCO is composed of a large chain homodimer in a 'head-to-tail' conformation. In form I RuBisCO this homodimer is arranged in a barrel-like tetramer with the small subunits forming a tetrameric 'cap' on each end of the 'barrel'.</text>
</comment>
<comment type="similarity">
    <text evidence="1">Belongs to the RuBisCO large chain family. Type I subfamily.</text>
</comment>
<dbReference type="EC" id="4.1.1.39" evidence="1"/>
<dbReference type="EMBL" id="X56617">
    <property type="protein sequence ID" value="CAA39955.1"/>
    <property type="molecule type" value="Genomic_DNA"/>
</dbReference>
<dbReference type="SMR" id="Q06022"/>
<dbReference type="GO" id="GO:0009507">
    <property type="term" value="C:chloroplast"/>
    <property type="evidence" value="ECO:0007669"/>
    <property type="project" value="UniProtKB-SubCell"/>
</dbReference>
<dbReference type="GO" id="GO:0000287">
    <property type="term" value="F:magnesium ion binding"/>
    <property type="evidence" value="ECO:0007669"/>
    <property type="project" value="UniProtKB-UniRule"/>
</dbReference>
<dbReference type="GO" id="GO:0004497">
    <property type="term" value="F:monooxygenase activity"/>
    <property type="evidence" value="ECO:0007669"/>
    <property type="project" value="UniProtKB-KW"/>
</dbReference>
<dbReference type="GO" id="GO:0016984">
    <property type="term" value="F:ribulose-bisphosphate carboxylase activity"/>
    <property type="evidence" value="ECO:0007669"/>
    <property type="project" value="UniProtKB-UniRule"/>
</dbReference>
<dbReference type="GO" id="GO:0009853">
    <property type="term" value="P:photorespiration"/>
    <property type="evidence" value="ECO:0007669"/>
    <property type="project" value="UniProtKB-KW"/>
</dbReference>
<dbReference type="GO" id="GO:0019253">
    <property type="term" value="P:reductive pentose-phosphate cycle"/>
    <property type="evidence" value="ECO:0007669"/>
    <property type="project" value="UniProtKB-UniRule"/>
</dbReference>
<dbReference type="CDD" id="cd08212">
    <property type="entry name" value="RuBisCO_large_I"/>
    <property type="match status" value="1"/>
</dbReference>
<dbReference type="FunFam" id="3.20.20.110:FF:000001">
    <property type="entry name" value="Ribulose bisphosphate carboxylase large chain"/>
    <property type="match status" value="1"/>
</dbReference>
<dbReference type="FunFam" id="3.30.70.150:FF:000001">
    <property type="entry name" value="Ribulose bisphosphate carboxylase large chain"/>
    <property type="match status" value="1"/>
</dbReference>
<dbReference type="Gene3D" id="3.20.20.110">
    <property type="entry name" value="Ribulose bisphosphate carboxylase, large subunit, C-terminal domain"/>
    <property type="match status" value="1"/>
</dbReference>
<dbReference type="Gene3D" id="3.30.70.150">
    <property type="entry name" value="RuBisCO large subunit, N-terminal domain"/>
    <property type="match status" value="1"/>
</dbReference>
<dbReference type="HAMAP" id="MF_01338">
    <property type="entry name" value="RuBisCO_L_type1"/>
    <property type="match status" value="1"/>
</dbReference>
<dbReference type="InterPro" id="IPR033966">
    <property type="entry name" value="RuBisCO"/>
</dbReference>
<dbReference type="InterPro" id="IPR020878">
    <property type="entry name" value="RuBisCo_large_chain_AS"/>
</dbReference>
<dbReference type="InterPro" id="IPR000685">
    <property type="entry name" value="RuBisCO_lsu_C"/>
</dbReference>
<dbReference type="InterPro" id="IPR036376">
    <property type="entry name" value="RuBisCO_lsu_C_sf"/>
</dbReference>
<dbReference type="InterPro" id="IPR017443">
    <property type="entry name" value="RuBisCO_lsu_fd_N"/>
</dbReference>
<dbReference type="InterPro" id="IPR036422">
    <property type="entry name" value="RuBisCO_lsu_N_sf"/>
</dbReference>
<dbReference type="InterPro" id="IPR020888">
    <property type="entry name" value="RuBisCO_lsuI"/>
</dbReference>
<dbReference type="NCBIfam" id="NF003252">
    <property type="entry name" value="PRK04208.1"/>
    <property type="match status" value="1"/>
</dbReference>
<dbReference type="PANTHER" id="PTHR42704">
    <property type="entry name" value="RIBULOSE BISPHOSPHATE CARBOXYLASE"/>
    <property type="match status" value="1"/>
</dbReference>
<dbReference type="PANTHER" id="PTHR42704:SF15">
    <property type="entry name" value="RIBULOSE BISPHOSPHATE CARBOXYLASE LARGE CHAIN"/>
    <property type="match status" value="1"/>
</dbReference>
<dbReference type="Pfam" id="PF00016">
    <property type="entry name" value="RuBisCO_large"/>
    <property type="match status" value="1"/>
</dbReference>
<dbReference type="Pfam" id="PF02788">
    <property type="entry name" value="RuBisCO_large_N"/>
    <property type="match status" value="1"/>
</dbReference>
<dbReference type="SFLD" id="SFLDG01052">
    <property type="entry name" value="RuBisCO"/>
    <property type="match status" value="1"/>
</dbReference>
<dbReference type="SFLD" id="SFLDS00014">
    <property type="entry name" value="RuBisCO"/>
    <property type="match status" value="1"/>
</dbReference>
<dbReference type="SFLD" id="SFLDG00301">
    <property type="entry name" value="RuBisCO-like_proteins"/>
    <property type="match status" value="1"/>
</dbReference>
<dbReference type="SUPFAM" id="SSF51649">
    <property type="entry name" value="RuBisCo, C-terminal domain"/>
    <property type="match status" value="1"/>
</dbReference>
<dbReference type="SUPFAM" id="SSF54966">
    <property type="entry name" value="RuBisCO, large subunit, small (N-terminal) domain"/>
    <property type="match status" value="1"/>
</dbReference>
<dbReference type="PROSITE" id="PS00157">
    <property type="entry name" value="RUBISCO_LARGE"/>
    <property type="match status" value="1"/>
</dbReference>
<keyword id="KW-0007">Acetylation</keyword>
<keyword id="KW-0113">Calvin cycle</keyword>
<keyword id="KW-0120">Carbon dioxide fixation</keyword>
<keyword id="KW-0150">Chloroplast</keyword>
<keyword id="KW-1015">Disulfide bond</keyword>
<keyword id="KW-0456">Lyase</keyword>
<keyword id="KW-0460">Magnesium</keyword>
<keyword id="KW-0479">Metal-binding</keyword>
<keyword id="KW-0488">Methylation</keyword>
<keyword id="KW-0503">Monooxygenase</keyword>
<keyword id="KW-0560">Oxidoreductase</keyword>
<keyword id="KW-0601">Photorespiration</keyword>
<keyword id="KW-0602">Photosynthesis</keyword>
<keyword id="KW-0934">Plastid</keyword>
<geneLocation type="chloroplast"/>
<feature type="propeptide" id="PRO_0000031139" evidence="1">
    <location>
        <begin position="1"/>
        <end position="2"/>
    </location>
</feature>
<feature type="chain" id="PRO_0000031140" description="Ribulose bisphosphate carboxylase large chain">
    <location>
        <begin position="3"/>
        <end position="475"/>
    </location>
</feature>
<feature type="active site" description="Proton acceptor" evidence="1">
    <location>
        <position position="175"/>
    </location>
</feature>
<feature type="active site" description="Proton acceptor" evidence="1">
    <location>
        <position position="294"/>
    </location>
</feature>
<feature type="binding site" description="in homodimeric partner" evidence="1">
    <location>
        <position position="123"/>
    </location>
    <ligand>
        <name>substrate</name>
    </ligand>
</feature>
<feature type="binding site" evidence="1">
    <location>
        <position position="173"/>
    </location>
    <ligand>
        <name>substrate</name>
    </ligand>
</feature>
<feature type="binding site" evidence="1">
    <location>
        <position position="177"/>
    </location>
    <ligand>
        <name>substrate</name>
    </ligand>
</feature>
<feature type="binding site" description="via carbamate group" evidence="1">
    <location>
        <position position="201"/>
    </location>
    <ligand>
        <name>Mg(2+)</name>
        <dbReference type="ChEBI" id="CHEBI:18420"/>
    </ligand>
</feature>
<feature type="binding site" evidence="1">
    <location>
        <position position="203"/>
    </location>
    <ligand>
        <name>Mg(2+)</name>
        <dbReference type="ChEBI" id="CHEBI:18420"/>
    </ligand>
</feature>
<feature type="binding site" evidence="1">
    <location>
        <position position="204"/>
    </location>
    <ligand>
        <name>Mg(2+)</name>
        <dbReference type="ChEBI" id="CHEBI:18420"/>
    </ligand>
</feature>
<feature type="binding site" evidence="1">
    <location>
        <position position="295"/>
    </location>
    <ligand>
        <name>substrate</name>
    </ligand>
</feature>
<feature type="binding site" evidence="1">
    <location>
        <position position="327"/>
    </location>
    <ligand>
        <name>substrate</name>
    </ligand>
</feature>
<feature type="binding site" evidence="1">
    <location>
        <position position="379"/>
    </location>
    <ligand>
        <name>substrate</name>
    </ligand>
</feature>
<feature type="site" description="Transition state stabilizer" evidence="1">
    <location>
        <position position="334"/>
    </location>
</feature>
<feature type="modified residue" description="N-acetylproline" evidence="1">
    <location>
        <position position="3"/>
    </location>
</feature>
<feature type="modified residue" description="N6,N6,N6-trimethyllysine" evidence="1">
    <location>
        <position position="14"/>
    </location>
</feature>
<feature type="modified residue" description="N6-carboxylysine" evidence="1">
    <location>
        <position position="201"/>
    </location>
</feature>
<feature type="disulfide bond" description="Interchain; in linked form" evidence="1">
    <location>
        <position position="247"/>
    </location>
</feature>
<reference key="1">
    <citation type="journal article" date="1992" name="Mol. Biol. Evol.">
        <title>Complete congruence between morphological and rbcL-based molecular phylogenies in birches and related species (Betulaceae).</title>
        <authorList>
            <person name="Bousquet J."/>
            <person name="Strauss S.H."/>
            <person name="Li P."/>
        </authorList>
    </citation>
    <scope>NUCLEOTIDE SEQUENCE [GENOMIC DNA]</scope>
    <source>
        <tissue>Leaf</tissue>
    </source>
</reference>
<organism>
    <name type="scientific">Betula papyrifera</name>
    <name type="common">Paper birch</name>
    <dbReference type="NCBI Taxonomy" id="3507"/>
    <lineage>
        <taxon>Eukaryota</taxon>
        <taxon>Viridiplantae</taxon>
        <taxon>Streptophyta</taxon>
        <taxon>Embryophyta</taxon>
        <taxon>Tracheophyta</taxon>
        <taxon>Spermatophyta</taxon>
        <taxon>Magnoliopsida</taxon>
        <taxon>eudicotyledons</taxon>
        <taxon>Gunneridae</taxon>
        <taxon>Pentapetalae</taxon>
        <taxon>rosids</taxon>
        <taxon>fabids</taxon>
        <taxon>Fagales</taxon>
        <taxon>Betulaceae</taxon>
        <taxon>Betula</taxon>
    </lineage>
</organism>
<gene>
    <name evidence="1" type="primary">rbcL</name>
</gene>
<sequence>MSPQTETKASVGFKAGVKDYKLTYHTPDYETKDTDILAAFRVTPQPGVPPEEAGAAVAAESSTGTWTTVWTDGLTSLDRYKGRCYHIEPVAGEESQFIAYVAYPLDLFEEGSVTNMFTSIVGNVFGFKALRALRLEDLRIPPAYSKTFQGPPHGIQVERDKLNKYGRPLLGCTIKPKLGLSAKNYGRAVYECLRGGLDFTKDDENVNSQPFMRWRDRFLFCAEAIYKAQAETGEIKGHYLNATAGTCEEMMKRAIFARELGVPIVMHDYLTGGFTANTSLAHYCRDNGLLLHIHRAMHAVIDRQKNHGIHFRVLAKALRMSGGDHIHAGTVVGKLEGEREITLGFVDLLRDDYIEKDRSRGIYFTQDWVSLPGVLPVASGGIHVWHMPALTEIFGDDSVLQFGGGTLGHPWGNAPGAVANRVALEACVQARNEGRDLAREGNEIIREAAKWSPELAAACEVWKEIKFEFPAMDTL</sequence>
<accession>Q06022</accession>